<name>LPAT3_ARATH</name>
<keyword id="KW-0012">Acyltransferase</keyword>
<keyword id="KW-0444">Lipid biosynthesis</keyword>
<keyword id="KW-0443">Lipid metabolism</keyword>
<keyword id="KW-0472">Membrane</keyword>
<keyword id="KW-0594">Phospholipid biosynthesis</keyword>
<keyword id="KW-1208">Phospholipid metabolism</keyword>
<keyword id="KW-1185">Reference proteome</keyword>
<keyword id="KW-0808">Transferase</keyword>
<keyword id="KW-0812">Transmembrane</keyword>
<keyword id="KW-1133">Transmembrane helix</keyword>
<sequence>MKIPAALVFIPVGVLFLISGLIVNIIQLVFFIIVRPFSRSLYRRINKNVAELLWLQLIWLFDWWACIKINLYVDAETLELIGKEHALVLSNHRSDIDWLIGWVMAQRVGCLGSSLAIMKKEAKYLPIIGWSMWFSDYIFLERSWAKDENTLKAGFKRLEDFPMTFWLALFVEGTRFTQEKLEAAQEYASIRSLPSPRNVLIPRTKGFVSAVSEIRSFVPAIYDCTLTVHNNQPTPTLLRMFSGQSSEINLQMRRHKMSELPETDDGIAQWCQDLFITKDAQLEKYFTKDVFSDLEVHQINRPIKPLIVVIIWLGFLVFGGFKLLQWLSIVASWKIILLFVFFLVIATITMQILIQSSESQRSTPAKRPLQEQLISA</sequence>
<protein>
    <recommendedName>
        <fullName>1-acyl-sn-glycerol-3-phosphate acyltransferase 3</fullName>
        <ecNumber>2.3.1.51</ecNumber>
    </recommendedName>
    <alternativeName>
        <fullName>Lysophosphatidyl acyltransferase 3</fullName>
    </alternativeName>
</protein>
<reference key="1">
    <citation type="journal article" date="2000" name="Nature">
        <title>Sequence and analysis of chromosome 1 of the plant Arabidopsis thaliana.</title>
        <authorList>
            <person name="Theologis A."/>
            <person name="Ecker J.R."/>
            <person name="Palm C.J."/>
            <person name="Federspiel N.A."/>
            <person name="Kaul S."/>
            <person name="White O."/>
            <person name="Alonso J."/>
            <person name="Altafi H."/>
            <person name="Araujo R."/>
            <person name="Bowman C.L."/>
            <person name="Brooks S.Y."/>
            <person name="Buehler E."/>
            <person name="Chan A."/>
            <person name="Chao Q."/>
            <person name="Chen H."/>
            <person name="Cheuk R.F."/>
            <person name="Chin C.W."/>
            <person name="Chung M.K."/>
            <person name="Conn L."/>
            <person name="Conway A.B."/>
            <person name="Conway A.R."/>
            <person name="Creasy T.H."/>
            <person name="Dewar K."/>
            <person name="Dunn P."/>
            <person name="Etgu P."/>
            <person name="Feldblyum T.V."/>
            <person name="Feng J.-D."/>
            <person name="Fong B."/>
            <person name="Fujii C.Y."/>
            <person name="Gill J.E."/>
            <person name="Goldsmith A.D."/>
            <person name="Haas B."/>
            <person name="Hansen N.F."/>
            <person name="Hughes B."/>
            <person name="Huizar L."/>
            <person name="Hunter J.L."/>
            <person name="Jenkins J."/>
            <person name="Johnson-Hopson C."/>
            <person name="Khan S."/>
            <person name="Khaykin E."/>
            <person name="Kim C.J."/>
            <person name="Koo H.L."/>
            <person name="Kremenetskaia I."/>
            <person name="Kurtz D.B."/>
            <person name="Kwan A."/>
            <person name="Lam B."/>
            <person name="Langin-Hooper S."/>
            <person name="Lee A."/>
            <person name="Lee J.M."/>
            <person name="Lenz C.A."/>
            <person name="Li J.H."/>
            <person name="Li Y.-P."/>
            <person name="Lin X."/>
            <person name="Liu S.X."/>
            <person name="Liu Z.A."/>
            <person name="Luros J.S."/>
            <person name="Maiti R."/>
            <person name="Marziali A."/>
            <person name="Militscher J."/>
            <person name="Miranda M."/>
            <person name="Nguyen M."/>
            <person name="Nierman W.C."/>
            <person name="Osborne B.I."/>
            <person name="Pai G."/>
            <person name="Peterson J."/>
            <person name="Pham P.K."/>
            <person name="Rizzo M."/>
            <person name="Rooney T."/>
            <person name="Rowley D."/>
            <person name="Sakano H."/>
            <person name="Salzberg S.L."/>
            <person name="Schwartz J.R."/>
            <person name="Shinn P."/>
            <person name="Southwick A.M."/>
            <person name="Sun H."/>
            <person name="Tallon L.J."/>
            <person name="Tambunga G."/>
            <person name="Toriumi M.J."/>
            <person name="Town C.D."/>
            <person name="Utterback T."/>
            <person name="Van Aken S."/>
            <person name="Vaysberg M."/>
            <person name="Vysotskaia V.S."/>
            <person name="Walker M."/>
            <person name="Wu D."/>
            <person name="Yu G."/>
            <person name="Fraser C.M."/>
            <person name="Venter J.C."/>
            <person name="Davis R.W."/>
        </authorList>
    </citation>
    <scope>NUCLEOTIDE SEQUENCE [LARGE SCALE GENOMIC DNA]</scope>
    <source>
        <strain>cv. Columbia</strain>
    </source>
</reference>
<reference key="2">
    <citation type="journal article" date="2017" name="Plant J.">
        <title>Araport11: a complete reannotation of the Arabidopsis thaliana reference genome.</title>
        <authorList>
            <person name="Cheng C.Y."/>
            <person name="Krishnakumar V."/>
            <person name="Chan A.P."/>
            <person name="Thibaud-Nissen F."/>
            <person name="Schobel S."/>
            <person name="Town C.D."/>
        </authorList>
    </citation>
    <scope>GENOME REANNOTATION</scope>
    <source>
        <strain>cv. Columbia</strain>
    </source>
</reference>
<reference key="3">
    <citation type="journal article" date="2004" name="Genome Res.">
        <title>Whole genome sequence comparisons and 'full-length' cDNA sequences: a combined approach to evaluate and improve Arabidopsis genome annotation.</title>
        <authorList>
            <person name="Castelli V."/>
            <person name="Aury J.-M."/>
            <person name="Jaillon O."/>
            <person name="Wincker P."/>
            <person name="Clepet C."/>
            <person name="Menard M."/>
            <person name="Cruaud C."/>
            <person name="Quetier F."/>
            <person name="Scarpelli C."/>
            <person name="Schaechter V."/>
            <person name="Temple G."/>
            <person name="Caboche M."/>
            <person name="Weissenbach J."/>
            <person name="Salanoubat M."/>
        </authorList>
    </citation>
    <scope>NUCLEOTIDE SEQUENCE [LARGE SCALE MRNA]</scope>
    <source>
        <strain>cv. Columbia</strain>
    </source>
</reference>
<reference key="4">
    <citation type="journal article" date="2005" name="Plant Cell">
        <title>Ubiquitous and endoplasmic reticulum-located lysophosphatidyl acyltransferase, LPAT2, is essential for female but not male gametophyte development in Arabidopsis.</title>
        <authorList>
            <person name="Kim H.U."/>
            <person name="Li Y."/>
            <person name="Huang A.H.C."/>
        </authorList>
    </citation>
    <scope>ENZYME ACTIVITY</scope>
    <scope>TISSUE SPECIFICITY</scope>
</reference>
<accession>Q9SYC8</accession>
<feature type="chain" id="PRO_0000208182" description="1-acyl-sn-glycerol-3-phosphate acyltransferase 3">
    <location>
        <begin position="1"/>
        <end position="376"/>
    </location>
</feature>
<feature type="transmembrane region" description="Helical" evidence="2">
    <location>
        <begin position="14"/>
        <end position="34"/>
    </location>
</feature>
<feature type="transmembrane region" description="Helical" evidence="2">
    <location>
        <begin position="49"/>
        <end position="69"/>
    </location>
</feature>
<feature type="transmembrane region" description="Helical" evidence="2">
    <location>
        <begin position="98"/>
        <end position="118"/>
    </location>
</feature>
<feature type="transmembrane region" description="Helical" evidence="2">
    <location>
        <begin position="306"/>
        <end position="326"/>
    </location>
</feature>
<feature type="transmembrane region" description="Helical" evidence="2">
    <location>
        <begin position="335"/>
        <end position="355"/>
    </location>
</feature>
<feature type="short sequence motif" description="HXXXXD motif">
    <location>
        <begin position="92"/>
        <end position="97"/>
    </location>
</feature>
<feature type="sequence conflict" description="In Ref. 3; BX813937." evidence="4" ref="3">
    <original>I</original>
    <variation>S</variation>
    <location>
        <position position="354"/>
    </location>
</feature>
<evidence type="ECO:0000250" key="1"/>
<evidence type="ECO:0000255" key="2"/>
<evidence type="ECO:0000269" key="3">
    <source>
    </source>
</evidence>
<evidence type="ECO:0000305" key="4"/>
<organism>
    <name type="scientific">Arabidopsis thaliana</name>
    <name type="common">Mouse-ear cress</name>
    <dbReference type="NCBI Taxonomy" id="3702"/>
    <lineage>
        <taxon>Eukaryota</taxon>
        <taxon>Viridiplantae</taxon>
        <taxon>Streptophyta</taxon>
        <taxon>Embryophyta</taxon>
        <taxon>Tracheophyta</taxon>
        <taxon>Spermatophyta</taxon>
        <taxon>Magnoliopsida</taxon>
        <taxon>eudicotyledons</taxon>
        <taxon>Gunneridae</taxon>
        <taxon>Pentapetalae</taxon>
        <taxon>rosids</taxon>
        <taxon>malvids</taxon>
        <taxon>Brassicales</taxon>
        <taxon>Brassicaceae</taxon>
        <taxon>Camelineae</taxon>
        <taxon>Arabidopsis</taxon>
    </lineage>
</organism>
<gene>
    <name type="primary">LPAT3</name>
    <name type="synonym">LPAAT3</name>
    <name type="ordered locus">At1g51260</name>
    <name type="ORF">F11M15.12</name>
</gene>
<proteinExistence type="evidence at transcript level"/>
<comment type="function">
    <text>Converts lysophosphatidic acid (LPA) into phosphatidic acid by incorporating acyl moiety at the 2 position. Has preference for C-18-CoA substrates compared to C-16-CoA substrates.</text>
</comment>
<comment type="catalytic activity">
    <reaction evidence="3">
        <text>a 1-acyl-sn-glycero-3-phosphate + an acyl-CoA = a 1,2-diacyl-sn-glycero-3-phosphate + CoA</text>
        <dbReference type="Rhea" id="RHEA:19709"/>
        <dbReference type="ChEBI" id="CHEBI:57287"/>
        <dbReference type="ChEBI" id="CHEBI:57970"/>
        <dbReference type="ChEBI" id="CHEBI:58342"/>
        <dbReference type="ChEBI" id="CHEBI:58608"/>
        <dbReference type="EC" id="2.3.1.51"/>
    </reaction>
</comment>
<comment type="pathway">
    <text>Phospholipid metabolism; CDP-diacylglycerol biosynthesis; CDP-diacylglycerol from sn-glycerol 3-phosphate: step 2/3.</text>
</comment>
<comment type="subcellular location">
    <subcellularLocation>
        <location evidence="4">Membrane</location>
        <topology evidence="4">Multi-pass membrane protein</topology>
    </subcellularLocation>
</comment>
<comment type="tissue specificity">
    <text evidence="3">Predominantly expressed in pollen.</text>
</comment>
<comment type="domain">
    <text evidence="1">The HXXXXD motif is essential for acyltransferase activity and may constitute the binding site for the phosphate moiety of the glycerol-3-phosphate.</text>
</comment>
<comment type="similarity">
    <text evidence="4">Belongs to the 1-acyl-sn-glycerol-3-phosphate acyltransferase family.</text>
</comment>
<comment type="sequence caution" evidence="4">
    <conflict type="erroneous termination">
        <sequence resource="EMBL" id="BX813937"/>
    </conflict>
    <text>Truncated C-terminus.</text>
</comment>
<dbReference type="EC" id="2.3.1.51"/>
<dbReference type="EMBL" id="AC006085">
    <property type="protein sequence ID" value="AAD30638.1"/>
    <property type="molecule type" value="Genomic_DNA"/>
</dbReference>
<dbReference type="EMBL" id="CP002684">
    <property type="protein sequence ID" value="AEE32642.1"/>
    <property type="molecule type" value="Genomic_DNA"/>
</dbReference>
<dbReference type="EMBL" id="BX813937">
    <property type="status" value="NOT_ANNOTATED_CDS"/>
    <property type="molecule type" value="mRNA"/>
</dbReference>
<dbReference type="PIR" id="D96550">
    <property type="entry name" value="D96550"/>
</dbReference>
<dbReference type="RefSeq" id="NP_175537.1">
    <property type="nucleotide sequence ID" value="NM_104004.3"/>
</dbReference>
<dbReference type="FunCoup" id="Q9SYC8">
    <property type="interactions" value="903"/>
</dbReference>
<dbReference type="STRING" id="3702.Q9SYC8"/>
<dbReference type="iPTMnet" id="Q9SYC8"/>
<dbReference type="PaxDb" id="3702-AT1G51260.1"/>
<dbReference type="ProteomicsDB" id="238667"/>
<dbReference type="EnsemblPlants" id="AT1G51260.1">
    <property type="protein sequence ID" value="AT1G51260.1"/>
    <property type="gene ID" value="AT1G51260"/>
</dbReference>
<dbReference type="GeneID" id="841549"/>
<dbReference type="Gramene" id="AT1G51260.1">
    <property type="protein sequence ID" value="AT1G51260.1"/>
    <property type="gene ID" value="AT1G51260"/>
</dbReference>
<dbReference type="KEGG" id="ath:AT1G51260"/>
<dbReference type="Araport" id="AT1G51260"/>
<dbReference type="TAIR" id="AT1G51260">
    <property type="gene designation" value="LPAT3"/>
</dbReference>
<dbReference type="eggNOG" id="KOG1505">
    <property type="taxonomic scope" value="Eukaryota"/>
</dbReference>
<dbReference type="HOGENOM" id="CLU_041844_5_0_1"/>
<dbReference type="InParanoid" id="Q9SYC8"/>
<dbReference type="OMA" id="YPLYAFY"/>
<dbReference type="PhylomeDB" id="Q9SYC8"/>
<dbReference type="BioCyc" id="ARA:AT1G51260-MONOMER"/>
<dbReference type="BRENDA" id="2.3.1.51">
    <property type="organism ID" value="399"/>
</dbReference>
<dbReference type="UniPathway" id="UPA00557">
    <property type="reaction ID" value="UER00613"/>
</dbReference>
<dbReference type="PRO" id="PR:Q9SYC8"/>
<dbReference type="Proteomes" id="UP000006548">
    <property type="component" value="Chromosome 1"/>
</dbReference>
<dbReference type="ExpressionAtlas" id="Q9SYC8">
    <property type="expression patterns" value="baseline and differential"/>
</dbReference>
<dbReference type="GO" id="GO:0016020">
    <property type="term" value="C:membrane"/>
    <property type="evidence" value="ECO:0007669"/>
    <property type="project" value="UniProtKB-SubCell"/>
</dbReference>
<dbReference type="GO" id="GO:0003841">
    <property type="term" value="F:1-acylglycerol-3-phosphate O-acyltransferase activity"/>
    <property type="evidence" value="ECO:0000314"/>
    <property type="project" value="TAIR"/>
</dbReference>
<dbReference type="GO" id="GO:0016024">
    <property type="term" value="P:CDP-diacylglycerol biosynthetic process"/>
    <property type="evidence" value="ECO:0007669"/>
    <property type="project" value="UniProtKB-UniPathway"/>
</dbReference>
<dbReference type="CDD" id="cd07990">
    <property type="entry name" value="LPLAT_LCLAT1-like"/>
    <property type="match status" value="1"/>
</dbReference>
<dbReference type="InterPro" id="IPR032098">
    <property type="entry name" value="Acyltransf_C"/>
</dbReference>
<dbReference type="InterPro" id="IPR002123">
    <property type="entry name" value="Plipid/glycerol_acylTrfase"/>
</dbReference>
<dbReference type="PANTHER" id="PTHR10983:SF55">
    <property type="entry name" value="1-ACYL-SN-GLYCEROL-3-PHOSPHATE ACYLTRANSFERASE 3"/>
    <property type="match status" value="1"/>
</dbReference>
<dbReference type="PANTHER" id="PTHR10983">
    <property type="entry name" value="1-ACYLGLYCEROL-3-PHOSPHATE ACYLTRANSFERASE-RELATED"/>
    <property type="match status" value="1"/>
</dbReference>
<dbReference type="Pfam" id="PF16076">
    <property type="entry name" value="Acyltransf_C"/>
    <property type="match status" value="1"/>
</dbReference>
<dbReference type="Pfam" id="PF01553">
    <property type="entry name" value="Acyltransferase"/>
    <property type="match status" value="1"/>
</dbReference>
<dbReference type="SMART" id="SM00563">
    <property type="entry name" value="PlsC"/>
    <property type="match status" value="1"/>
</dbReference>
<dbReference type="SUPFAM" id="SSF69593">
    <property type="entry name" value="Glycerol-3-phosphate (1)-acyltransferase"/>
    <property type="match status" value="1"/>
</dbReference>